<feature type="chain" id="PRO_0000133649" description="Probable WRKY transcription factor 7">
    <location>
        <begin position="1"/>
        <end position="353"/>
    </location>
</feature>
<feature type="DNA-binding region" description="WRKY" evidence="2">
    <location>
        <begin position="275"/>
        <end position="341"/>
    </location>
</feature>
<feature type="region of interest" description="Disordered" evidence="3">
    <location>
        <begin position="117"/>
        <end position="259"/>
    </location>
</feature>
<feature type="compositionally biased region" description="Low complexity" evidence="3">
    <location>
        <begin position="158"/>
        <end position="176"/>
    </location>
</feature>
<feature type="compositionally biased region" description="Polar residues" evidence="3">
    <location>
        <begin position="184"/>
        <end position="204"/>
    </location>
</feature>
<feature type="compositionally biased region" description="Polar residues" evidence="3">
    <location>
        <begin position="213"/>
        <end position="229"/>
    </location>
</feature>
<evidence type="ECO:0000250" key="1"/>
<evidence type="ECO:0000255" key="2">
    <source>
        <dbReference type="PROSITE-ProRule" id="PRU00223"/>
    </source>
</evidence>
<evidence type="ECO:0000256" key="3">
    <source>
        <dbReference type="SAM" id="MobiDB-lite"/>
    </source>
</evidence>
<evidence type="ECO:0000269" key="4">
    <source>
    </source>
</evidence>
<evidence type="ECO:0000269" key="5">
    <source>
    </source>
</evidence>
<evidence type="ECO:0000305" key="6"/>
<gene>
    <name type="primary">WRKY7</name>
    <name type="ordered locus">At4g24240</name>
    <name type="ORF">T22A6.70</name>
</gene>
<accession>Q9STX0</accession>
<comment type="function">
    <text evidence="1">Transcription factor. Interacts specifically with the W box (5'-(T)TGAC[CT]-3'), a frequently occurring elicitor-responsive cis-acting element (By similarity).</text>
</comment>
<comment type="interaction">
    <interactant intactId="EBI-2364652">
        <id>Q9STX0</id>
    </interactant>
    <interactant intactId="EBI-25522521">
        <id>A0A384L780</id>
        <label>At1g21200</label>
    </interactant>
    <organismsDiffer>false</organismsDiffer>
    <experiments>3</experiments>
</comment>
<comment type="interaction">
    <interactant intactId="EBI-2364652">
        <id>Q9STX0</id>
    </interactant>
    <interactant intactId="EBI-3946710">
        <id>Q9M1R4</id>
        <label>IAA30</label>
    </interactant>
    <organismsDiffer>false</organismsDiffer>
    <experiments>5</experiments>
</comment>
<comment type="subcellular location">
    <subcellularLocation>
        <location evidence="6">Nucleus</location>
    </subcellularLocation>
</comment>
<comment type="tissue specificity">
    <text evidence="5">In young, mature and senescent leaves.</text>
</comment>
<comment type="induction">
    <text evidence="4 5">By salicylic acid and strongly during leaf senescence.</text>
</comment>
<comment type="similarity">
    <text evidence="6">Belongs to the WRKY group II-d family.</text>
</comment>
<dbReference type="EMBL" id="AF272746">
    <property type="protein sequence ID" value="AAK28440.1"/>
    <property type="molecule type" value="mRNA"/>
</dbReference>
<dbReference type="EMBL" id="AL078637">
    <property type="protein sequence ID" value="CAB45059.1"/>
    <property type="molecule type" value="Genomic_DNA"/>
</dbReference>
<dbReference type="EMBL" id="AL161561">
    <property type="protein sequence ID" value="CAB79334.1"/>
    <property type="molecule type" value="Genomic_DNA"/>
</dbReference>
<dbReference type="EMBL" id="CP002687">
    <property type="protein sequence ID" value="AEE84877.1"/>
    <property type="molecule type" value="Genomic_DNA"/>
</dbReference>
<dbReference type="EMBL" id="AY072151">
    <property type="protein sequence ID" value="AAL59973.1"/>
    <property type="molecule type" value="mRNA"/>
</dbReference>
<dbReference type="EMBL" id="AY096490">
    <property type="protein sequence ID" value="AAM20130.1"/>
    <property type="molecule type" value="mRNA"/>
</dbReference>
<dbReference type="EMBL" id="AY084583">
    <property type="protein sequence ID" value="AAM61148.1"/>
    <property type="molecule type" value="mRNA"/>
</dbReference>
<dbReference type="PIR" id="T09887">
    <property type="entry name" value="T09887"/>
</dbReference>
<dbReference type="RefSeq" id="NP_194155.1">
    <property type="nucleotide sequence ID" value="NM_118557.4"/>
</dbReference>
<dbReference type="SMR" id="Q9STX0"/>
<dbReference type="BioGRID" id="13814">
    <property type="interactions" value="16"/>
</dbReference>
<dbReference type="FunCoup" id="Q9STX0">
    <property type="interactions" value="21"/>
</dbReference>
<dbReference type="IntAct" id="Q9STX0">
    <property type="interactions" value="13"/>
</dbReference>
<dbReference type="MINT" id="Q9STX0"/>
<dbReference type="STRING" id="3702.Q9STX0"/>
<dbReference type="PaxDb" id="3702-AT4G24240.1"/>
<dbReference type="ProteomicsDB" id="234395"/>
<dbReference type="EnsemblPlants" id="AT4G24240.1">
    <property type="protein sequence ID" value="AT4G24240.1"/>
    <property type="gene ID" value="AT4G24240"/>
</dbReference>
<dbReference type="GeneID" id="828525"/>
<dbReference type="Gramene" id="AT4G24240.1">
    <property type="protein sequence ID" value="AT4G24240.1"/>
    <property type="gene ID" value="AT4G24240"/>
</dbReference>
<dbReference type="KEGG" id="ath:AT4G24240"/>
<dbReference type="Araport" id="AT4G24240"/>
<dbReference type="TAIR" id="AT4G24240">
    <property type="gene designation" value="WRKY7"/>
</dbReference>
<dbReference type="eggNOG" id="ENOG502QU4H">
    <property type="taxonomic scope" value="Eukaryota"/>
</dbReference>
<dbReference type="HOGENOM" id="CLU_040478_1_0_1"/>
<dbReference type="InParanoid" id="Q9STX0"/>
<dbReference type="OrthoDB" id="756799at2759"/>
<dbReference type="PhylomeDB" id="Q9STX0"/>
<dbReference type="PRO" id="PR:Q9STX0"/>
<dbReference type="Proteomes" id="UP000006548">
    <property type="component" value="Chromosome 4"/>
</dbReference>
<dbReference type="ExpressionAtlas" id="Q9STX0">
    <property type="expression patterns" value="baseline and differential"/>
</dbReference>
<dbReference type="GO" id="GO:0005634">
    <property type="term" value="C:nucleus"/>
    <property type="evidence" value="ECO:0000305"/>
    <property type="project" value="TAIR"/>
</dbReference>
<dbReference type="GO" id="GO:0005516">
    <property type="term" value="F:calmodulin binding"/>
    <property type="evidence" value="ECO:0000314"/>
    <property type="project" value="TAIR"/>
</dbReference>
<dbReference type="GO" id="GO:0003700">
    <property type="term" value="F:DNA-binding transcription factor activity"/>
    <property type="evidence" value="ECO:0000250"/>
    <property type="project" value="TAIR"/>
</dbReference>
<dbReference type="GO" id="GO:0000976">
    <property type="term" value="F:transcription cis-regulatory region binding"/>
    <property type="evidence" value="ECO:0000353"/>
    <property type="project" value="TAIR"/>
</dbReference>
<dbReference type="FunFam" id="2.20.25.80:FF:000004">
    <property type="entry name" value="WRKY transcription factor 65"/>
    <property type="match status" value="1"/>
</dbReference>
<dbReference type="Gene3D" id="2.20.25.80">
    <property type="entry name" value="WRKY domain"/>
    <property type="match status" value="1"/>
</dbReference>
<dbReference type="InterPro" id="IPR003657">
    <property type="entry name" value="WRKY_dom"/>
</dbReference>
<dbReference type="InterPro" id="IPR036576">
    <property type="entry name" value="WRKY_dom_sf"/>
</dbReference>
<dbReference type="InterPro" id="IPR044810">
    <property type="entry name" value="WRKY_plant"/>
</dbReference>
<dbReference type="InterPro" id="IPR018872">
    <property type="entry name" value="Zn-cluster-dom"/>
</dbReference>
<dbReference type="PANTHER" id="PTHR31282">
    <property type="entry name" value="WRKY TRANSCRIPTION FACTOR 21-RELATED"/>
    <property type="match status" value="1"/>
</dbReference>
<dbReference type="Pfam" id="PF10533">
    <property type="entry name" value="Plant_zn_clust"/>
    <property type="match status" value="1"/>
</dbReference>
<dbReference type="Pfam" id="PF03106">
    <property type="entry name" value="WRKY"/>
    <property type="match status" value="1"/>
</dbReference>
<dbReference type="SMART" id="SM00774">
    <property type="entry name" value="WRKY"/>
    <property type="match status" value="1"/>
</dbReference>
<dbReference type="SUPFAM" id="SSF118290">
    <property type="entry name" value="WRKY DNA-binding domain"/>
    <property type="match status" value="1"/>
</dbReference>
<dbReference type="PROSITE" id="PS50811">
    <property type="entry name" value="WRKY"/>
    <property type="match status" value="1"/>
</dbReference>
<name>WRKY7_ARATH</name>
<sequence>MTVELMMSSYSGGGGGGDGFPAIAAAAKMEDTALREAASAGIHGVEEFLKLIGQSQQPTEKSQTEITAVTDVAVNSFKKVISLLGRSRTGHARFRRAPASTQTPFKQTPVVEEEVEVEEKKPETSSVLTKQKTEQYHGGGSAFRVYCPTPIHRRPPLSHNNNNNQNQTKNGSSSSSPPMLANGAPSTINFAPSPPVSATNSFMSSHRCDTDSTHMSSGFEFTNPSQLSGSRGKPPLSSASLKRRCNSSPSSRCHCSKKRKSRVKRVIRVPAVSSKMADIPSDEFSWRKYGQKPIKGSPHPRGYYKCSSVRGCPARKHVERALDDAMMLIVTYEGDHNHALVLETTTMNHDKTL</sequence>
<organism>
    <name type="scientific">Arabidopsis thaliana</name>
    <name type="common">Mouse-ear cress</name>
    <dbReference type="NCBI Taxonomy" id="3702"/>
    <lineage>
        <taxon>Eukaryota</taxon>
        <taxon>Viridiplantae</taxon>
        <taxon>Streptophyta</taxon>
        <taxon>Embryophyta</taxon>
        <taxon>Tracheophyta</taxon>
        <taxon>Spermatophyta</taxon>
        <taxon>Magnoliopsida</taxon>
        <taxon>eudicotyledons</taxon>
        <taxon>Gunneridae</taxon>
        <taxon>Pentapetalae</taxon>
        <taxon>rosids</taxon>
        <taxon>malvids</taxon>
        <taxon>Brassicales</taxon>
        <taxon>Brassicaceae</taxon>
        <taxon>Camelineae</taxon>
        <taxon>Arabidopsis</taxon>
    </lineage>
</organism>
<reference key="1">
    <citation type="journal article" date="2001" name="Plant Cell">
        <title>Evidence for an important role of WRKY DNA binding proteins in the regulation of NPR1 gene expression.</title>
        <authorList>
            <person name="Yu D."/>
            <person name="Chen C."/>
            <person name="Chen Z."/>
        </authorList>
    </citation>
    <scope>NUCLEOTIDE SEQUENCE</scope>
    <scope>INDUCTION</scope>
</reference>
<reference key="2">
    <citation type="journal article" date="1999" name="Nature">
        <title>Sequence and analysis of chromosome 4 of the plant Arabidopsis thaliana.</title>
        <authorList>
            <person name="Mayer K.F.X."/>
            <person name="Schueller C."/>
            <person name="Wambutt R."/>
            <person name="Murphy G."/>
            <person name="Volckaert G."/>
            <person name="Pohl T."/>
            <person name="Duesterhoeft A."/>
            <person name="Stiekema W."/>
            <person name="Entian K.-D."/>
            <person name="Terryn N."/>
            <person name="Harris B."/>
            <person name="Ansorge W."/>
            <person name="Brandt P."/>
            <person name="Grivell L.A."/>
            <person name="Rieger M."/>
            <person name="Weichselgartner M."/>
            <person name="de Simone V."/>
            <person name="Obermaier B."/>
            <person name="Mache R."/>
            <person name="Mueller M."/>
            <person name="Kreis M."/>
            <person name="Delseny M."/>
            <person name="Puigdomenech P."/>
            <person name="Watson M."/>
            <person name="Schmidtheini T."/>
            <person name="Reichert B."/>
            <person name="Portetelle D."/>
            <person name="Perez-Alonso M."/>
            <person name="Boutry M."/>
            <person name="Bancroft I."/>
            <person name="Vos P."/>
            <person name="Hoheisel J."/>
            <person name="Zimmermann W."/>
            <person name="Wedler H."/>
            <person name="Ridley P."/>
            <person name="Langham S.-A."/>
            <person name="McCullagh B."/>
            <person name="Bilham L."/>
            <person name="Robben J."/>
            <person name="van der Schueren J."/>
            <person name="Grymonprez B."/>
            <person name="Chuang Y.-J."/>
            <person name="Vandenbussche F."/>
            <person name="Braeken M."/>
            <person name="Weltjens I."/>
            <person name="Voet M."/>
            <person name="Bastiaens I."/>
            <person name="Aert R."/>
            <person name="Defoor E."/>
            <person name="Weitzenegger T."/>
            <person name="Bothe G."/>
            <person name="Ramsperger U."/>
            <person name="Hilbert H."/>
            <person name="Braun M."/>
            <person name="Holzer E."/>
            <person name="Brandt A."/>
            <person name="Peters S."/>
            <person name="van Staveren M."/>
            <person name="Dirkse W."/>
            <person name="Mooijman P."/>
            <person name="Klein Lankhorst R."/>
            <person name="Rose M."/>
            <person name="Hauf J."/>
            <person name="Koetter P."/>
            <person name="Berneiser S."/>
            <person name="Hempel S."/>
            <person name="Feldpausch M."/>
            <person name="Lamberth S."/>
            <person name="Van den Daele H."/>
            <person name="De Keyser A."/>
            <person name="Buysshaert C."/>
            <person name="Gielen J."/>
            <person name="Villarroel R."/>
            <person name="De Clercq R."/>
            <person name="van Montagu M."/>
            <person name="Rogers J."/>
            <person name="Cronin A."/>
            <person name="Quail M.A."/>
            <person name="Bray-Allen S."/>
            <person name="Clark L."/>
            <person name="Doggett J."/>
            <person name="Hall S."/>
            <person name="Kay M."/>
            <person name="Lennard N."/>
            <person name="McLay K."/>
            <person name="Mayes R."/>
            <person name="Pettett A."/>
            <person name="Rajandream M.A."/>
            <person name="Lyne M."/>
            <person name="Benes V."/>
            <person name="Rechmann S."/>
            <person name="Borkova D."/>
            <person name="Bloecker H."/>
            <person name="Scharfe M."/>
            <person name="Grimm M."/>
            <person name="Loehnert T.-H."/>
            <person name="Dose S."/>
            <person name="de Haan M."/>
            <person name="Maarse A.C."/>
            <person name="Schaefer M."/>
            <person name="Mueller-Auer S."/>
            <person name="Gabel C."/>
            <person name="Fuchs M."/>
            <person name="Fartmann B."/>
            <person name="Granderath K."/>
            <person name="Dauner D."/>
            <person name="Herzl A."/>
            <person name="Neumann S."/>
            <person name="Argiriou A."/>
            <person name="Vitale D."/>
            <person name="Liguori R."/>
            <person name="Piravandi E."/>
            <person name="Massenet O."/>
            <person name="Quigley F."/>
            <person name="Clabauld G."/>
            <person name="Muendlein A."/>
            <person name="Felber R."/>
            <person name="Schnabl S."/>
            <person name="Hiller R."/>
            <person name="Schmidt W."/>
            <person name="Lecharny A."/>
            <person name="Aubourg S."/>
            <person name="Chefdor F."/>
            <person name="Cooke R."/>
            <person name="Berger C."/>
            <person name="Monfort A."/>
            <person name="Casacuberta E."/>
            <person name="Gibbons T."/>
            <person name="Weber N."/>
            <person name="Vandenbol M."/>
            <person name="Bargues M."/>
            <person name="Terol J."/>
            <person name="Torres A."/>
            <person name="Perez-Perez A."/>
            <person name="Purnelle B."/>
            <person name="Bent E."/>
            <person name="Johnson S."/>
            <person name="Tacon D."/>
            <person name="Jesse T."/>
            <person name="Heijnen L."/>
            <person name="Schwarz S."/>
            <person name="Scholler P."/>
            <person name="Heber S."/>
            <person name="Francs P."/>
            <person name="Bielke C."/>
            <person name="Frishman D."/>
            <person name="Haase D."/>
            <person name="Lemcke K."/>
            <person name="Mewes H.-W."/>
            <person name="Stocker S."/>
            <person name="Zaccaria P."/>
            <person name="Bevan M."/>
            <person name="Wilson R.K."/>
            <person name="de la Bastide M."/>
            <person name="Habermann K."/>
            <person name="Parnell L."/>
            <person name="Dedhia N."/>
            <person name="Gnoj L."/>
            <person name="Schutz K."/>
            <person name="Huang E."/>
            <person name="Spiegel L."/>
            <person name="Sekhon M."/>
            <person name="Murray J."/>
            <person name="Sheet P."/>
            <person name="Cordes M."/>
            <person name="Abu-Threideh J."/>
            <person name="Stoneking T."/>
            <person name="Kalicki J."/>
            <person name="Graves T."/>
            <person name="Harmon G."/>
            <person name="Edwards J."/>
            <person name="Latreille P."/>
            <person name="Courtney L."/>
            <person name="Cloud J."/>
            <person name="Abbott A."/>
            <person name="Scott K."/>
            <person name="Johnson D."/>
            <person name="Minx P."/>
            <person name="Bentley D."/>
            <person name="Fulton B."/>
            <person name="Miller N."/>
            <person name="Greco T."/>
            <person name="Kemp K."/>
            <person name="Kramer J."/>
            <person name="Fulton L."/>
            <person name="Mardis E."/>
            <person name="Dante M."/>
            <person name="Pepin K."/>
            <person name="Hillier L.W."/>
            <person name="Nelson J."/>
            <person name="Spieth J."/>
            <person name="Ryan E."/>
            <person name="Andrews S."/>
            <person name="Geisel C."/>
            <person name="Layman D."/>
            <person name="Du H."/>
            <person name="Ali J."/>
            <person name="Berghoff A."/>
            <person name="Jones K."/>
            <person name="Drone K."/>
            <person name="Cotton M."/>
            <person name="Joshu C."/>
            <person name="Antonoiu B."/>
            <person name="Zidanic M."/>
            <person name="Strong C."/>
            <person name="Sun H."/>
            <person name="Lamar B."/>
            <person name="Yordan C."/>
            <person name="Ma P."/>
            <person name="Zhong J."/>
            <person name="Preston R."/>
            <person name="Vil D."/>
            <person name="Shekher M."/>
            <person name="Matero A."/>
            <person name="Shah R."/>
            <person name="Swaby I.K."/>
            <person name="O'Shaughnessy A."/>
            <person name="Rodriguez M."/>
            <person name="Hoffman J."/>
            <person name="Till S."/>
            <person name="Granat S."/>
            <person name="Shohdy N."/>
            <person name="Hasegawa A."/>
            <person name="Hameed A."/>
            <person name="Lodhi M."/>
            <person name="Johnson A."/>
            <person name="Chen E."/>
            <person name="Marra M.A."/>
            <person name="Martienssen R."/>
            <person name="McCombie W.R."/>
        </authorList>
    </citation>
    <scope>NUCLEOTIDE SEQUENCE [LARGE SCALE GENOMIC DNA]</scope>
    <source>
        <strain>cv. Columbia</strain>
    </source>
</reference>
<reference key="3">
    <citation type="journal article" date="2017" name="Plant J.">
        <title>Araport11: a complete reannotation of the Arabidopsis thaliana reference genome.</title>
        <authorList>
            <person name="Cheng C.Y."/>
            <person name="Krishnakumar V."/>
            <person name="Chan A.P."/>
            <person name="Thibaud-Nissen F."/>
            <person name="Schobel S."/>
            <person name="Town C.D."/>
        </authorList>
    </citation>
    <scope>GENOME REANNOTATION</scope>
    <source>
        <strain>cv. Columbia</strain>
    </source>
</reference>
<reference key="4">
    <citation type="journal article" date="2003" name="Science">
        <title>Empirical analysis of transcriptional activity in the Arabidopsis genome.</title>
        <authorList>
            <person name="Yamada K."/>
            <person name="Lim J."/>
            <person name="Dale J.M."/>
            <person name="Chen H."/>
            <person name="Shinn P."/>
            <person name="Palm C.J."/>
            <person name="Southwick A.M."/>
            <person name="Wu H.C."/>
            <person name="Kim C.J."/>
            <person name="Nguyen M."/>
            <person name="Pham P.K."/>
            <person name="Cheuk R.F."/>
            <person name="Karlin-Newmann G."/>
            <person name="Liu S.X."/>
            <person name="Lam B."/>
            <person name="Sakano H."/>
            <person name="Wu T."/>
            <person name="Yu G."/>
            <person name="Miranda M."/>
            <person name="Quach H.L."/>
            <person name="Tripp M."/>
            <person name="Chang C.H."/>
            <person name="Lee J.M."/>
            <person name="Toriumi M.J."/>
            <person name="Chan M.M."/>
            <person name="Tang C.C."/>
            <person name="Onodera C.S."/>
            <person name="Deng J.M."/>
            <person name="Akiyama K."/>
            <person name="Ansari Y."/>
            <person name="Arakawa T."/>
            <person name="Banh J."/>
            <person name="Banno F."/>
            <person name="Bowser L."/>
            <person name="Brooks S.Y."/>
            <person name="Carninci P."/>
            <person name="Chao Q."/>
            <person name="Choy N."/>
            <person name="Enju A."/>
            <person name="Goldsmith A.D."/>
            <person name="Gurjal M."/>
            <person name="Hansen N.F."/>
            <person name="Hayashizaki Y."/>
            <person name="Johnson-Hopson C."/>
            <person name="Hsuan V.W."/>
            <person name="Iida K."/>
            <person name="Karnes M."/>
            <person name="Khan S."/>
            <person name="Koesema E."/>
            <person name="Ishida J."/>
            <person name="Jiang P.X."/>
            <person name="Jones T."/>
            <person name="Kawai J."/>
            <person name="Kamiya A."/>
            <person name="Meyers C."/>
            <person name="Nakajima M."/>
            <person name="Narusaka M."/>
            <person name="Seki M."/>
            <person name="Sakurai T."/>
            <person name="Satou M."/>
            <person name="Tamse R."/>
            <person name="Vaysberg M."/>
            <person name="Wallender E.K."/>
            <person name="Wong C."/>
            <person name="Yamamura Y."/>
            <person name="Yuan S."/>
            <person name="Shinozaki K."/>
            <person name="Davis R.W."/>
            <person name="Theologis A."/>
            <person name="Ecker J.R."/>
        </authorList>
    </citation>
    <scope>NUCLEOTIDE SEQUENCE [LARGE SCALE MRNA]</scope>
    <source>
        <strain>cv. Columbia</strain>
    </source>
</reference>
<reference key="5">
    <citation type="submission" date="2002-03" db="EMBL/GenBank/DDBJ databases">
        <title>Full-length cDNA from Arabidopsis thaliana.</title>
        <authorList>
            <person name="Brover V.V."/>
            <person name="Troukhan M.E."/>
            <person name="Alexandrov N.A."/>
            <person name="Lu Y.-P."/>
            <person name="Flavell R.B."/>
            <person name="Feldmann K.A."/>
        </authorList>
    </citation>
    <scope>NUCLEOTIDE SEQUENCE [LARGE SCALE MRNA]</scope>
</reference>
<reference key="6">
    <citation type="journal article" date="2001" name="Plant J.">
        <title>A new member of the Arabidopsis WRKY transcription factor family, AtWRKY6, is associated with both senescence- and defence-related processes.</title>
        <authorList>
            <person name="Robatzek S."/>
            <person name="Somssich I.E."/>
        </authorList>
    </citation>
    <scope>TISSUE SPECIFICITY</scope>
    <scope>INDUCTION</scope>
</reference>
<proteinExistence type="evidence at protein level"/>
<protein>
    <recommendedName>
        <fullName>Probable WRKY transcription factor 7</fullName>
    </recommendedName>
    <alternativeName>
        <fullName>WRKY DNA-binding protein 7</fullName>
    </alternativeName>
</protein>
<keyword id="KW-0238">DNA-binding</keyword>
<keyword id="KW-0539">Nucleus</keyword>
<keyword id="KW-1185">Reference proteome</keyword>
<keyword id="KW-0804">Transcription</keyword>
<keyword id="KW-0805">Transcription regulation</keyword>